<keyword id="KW-0106">Calcium</keyword>
<keyword id="KW-0903">Direct protein sequencing</keyword>
<keyword id="KW-1015">Disulfide bond</keyword>
<keyword id="KW-0378">Hydrolase</keyword>
<keyword id="KW-0442">Lipid degradation</keyword>
<keyword id="KW-0443">Lipid metabolism</keyword>
<keyword id="KW-0528">Neurotoxin</keyword>
<keyword id="KW-0638">Presynaptic neurotoxin</keyword>
<keyword id="KW-0964">Secreted</keyword>
<keyword id="KW-0800">Toxin</keyword>
<comment type="function">
    <text evidence="5">Snake venom phospholipase A2 (PLA2) that inhibits neuromuscular transmission by blocking acetylcholine release from the nerve termini and exhibits indirect hemolytic activity against human erythrocytes. PLA2 catalyzes the calcium-dependent hydrolysis of the 2-acyl groups in 3-sn-phosphoglycerides.</text>
</comment>
<comment type="catalytic activity">
    <reaction evidence="1 3 4">
        <text>a 1,2-diacyl-sn-glycero-3-phosphocholine + H2O = a 1-acyl-sn-glycero-3-phosphocholine + a fatty acid + H(+)</text>
        <dbReference type="Rhea" id="RHEA:15801"/>
        <dbReference type="ChEBI" id="CHEBI:15377"/>
        <dbReference type="ChEBI" id="CHEBI:15378"/>
        <dbReference type="ChEBI" id="CHEBI:28868"/>
        <dbReference type="ChEBI" id="CHEBI:57643"/>
        <dbReference type="ChEBI" id="CHEBI:58168"/>
        <dbReference type="EC" id="3.1.1.4"/>
    </reaction>
</comment>
<comment type="cofactor">
    <cofactor evidence="1">
        <name>Ca(2+)</name>
        <dbReference type="ChEBI" id="CHEBI:29108"/>
    </cofactor>
    <text evidence="1">Binds 1 Ca(2+) ion.</text>
</comment>
<comment type="subunit">
    <text evidence="5">Heterodimer; disulfide-linked. The A chains have phospholipase A2 activity and the B chains show homology with the basic protease inhibitors.</text>
</comment>
<comment type="subcellular location">
    <subcellularLocation>
        <location evidence="5">Secreted</location>
    </subcellularLocation>
</comment>
<comment type="tissue specificity">
    <text evidence="5">Expressed by the venom gland.</text>
</comment>
<comment type="toxic dose">
    <text evidence="5">LD(50) is 0.84 mg/kg by intravenous injection in mice.</text>
</comment>
<comment type="similarity">
    <text evidence="2">Belongs to the phospholipase A2 family. Group I subfamily.</text>
</comment>
<proteinExistence type="evidence at protein level"/>
<accession>P84474</accession>
<name>PA2BU_BUNCA</name>
<evidence type="ECO:0000250" key="1">
    <source>
        <dbReference type="UniProtKB" id="P00617"/>
    </source>
</evidence>
<evidence type="ECO:0000255" key="2"/>
<evidence type="ECO:0000255" key="3">
    <source>
        <dbReference type="PROSITE-ProRule" id="PRU10035"/>
    </source>
</evidence>
<evidence type="ECO:0000255" key="4">
    <source>
        <dbReference type="PROSITE-ProRule" id="PRU10036"/>
    </source>
</evidence>
<evidence type="ECO:0000269" key="5">
    <source>
    </source>
</evidence>
<evidence type="ECO:0000303" key="6">
    <source>
    </source>
</evidence>
<evidence type="ECO:0000305" key="7"/>
<organism>
    <name type="scientific">Bungarus candidus</name>
    <name type="common">Malayan krait</name>
    <dbReference type="NCBI Taxonomy" id="92438"/>
    <lineage>
        <taxon>Eukaryota</taxon>
        <taxon>Metazoa</taxon>
        <taxon>Chordata</taxon>
        <taxon>Craniata</taxon>
        <taxon>Vertebrata</taxon>
        <taxon>Euteleostomi</taxon>
        <taxon>Lepidosauria</taxon>
        <taxon>Squamata</taxon>
        <taxon>Bifurcata</taxon>
        <taxon>Unidentata</taxon>
        <taxon>Episquamata</taxon>
        <taxon>Toxicofera</taxon>
        <taxon>Serpentes</taxon>
        <taxon>Colubroidea</taxon>
        <taxon>Elapidae</taxon>
        <taxon>Bungarinae</taxon>
        <taxon>Bungarus</taxon>
    </lineage>
</organism>
<feature type="chain" id="PRO_0000161632" description="Basic phospholipase A2 T2 A chain">
    <location>
        <begin position="1"/>
        <end position="14" status="greater than"/>
    </location>
</feature>
<feature type="non-terminal residue" evidence="6">
    <location>
        <position position="14"/>
    </location>
</feature>
<reference evidence="7" key="1">
    <citation type="journal article" date="2003" name="J. Biochem.">
        <title>Isolation, toxicity and amino terminal sequences of three major neurotoxins in the venom of Malayan krait (Bungarus candidus) from Thailand.</title>
        <authorList>
            <person name="Khow O."/>
            <person name="Chanhome L."/>
            <person name="Omori-Satoh T."/>
            <person name="Ogawa Y."/>
            <person name="Yanoshita R."/>
            <person name="Samejima Y."/>
            <person name="Kuch U."/>
            <person name="Mebs D."/>
            <person name="Sitprija V."/>
        </authorList>
    </citation>
    <scope>PROTEIN SEQUENCE</scope>
    <scope>FUNCTION</scope>
    <scope>SUBUNIT</scope>
    <scope>SUBCELLULAR LOCATION</scope>
    <scope>TISSUE SPECIFICITY</scope>
    <scope>TOXIC DOSE</scope>
    <source>
        <tissue evidence="5">Venom</tissue>
    </source>
</reference>
<protein>
    <recommendedName>
        <fullName>Basic phospholipase A2 T2 A chain</fullName>
        <shortName>svPLA2</shortName>
        <ecNumber>3.1.1.4</ecNumber>
    </recommendedName>
    <alternativeName>
        <fullName>Phosphatidylcholine 2-acylhydrolase T2 A</fullName>
    </alternativeName>
</protein>
<sequence>NLINFMEMIRYTIP</sequence>
<dbReference type="EC" id="3.1.1.4"/>
<dbReference type="GO" id="GO:0005576">
    <property type="term" value="C:extracellular region"/>
    <property type="evidence" value="ECO:0007669"/>
    <property type="project" value="UniProtKB-SubCell"/>
</dbReference>
<dbReference type="GO" id="GO:0004623">
    <property type="term" value="F:phospholipase A2 activity"/>
    <property type="evidence" value="ECO:0007669"/>
    <property type="project" value="UniProtKB-EC"/>
</dbReference>
<dbReference type="GO" id="GO:0090729">
    <property type="term" value="F:toxin activity"/>
    <property type="evidence" value="ECO:0007669"/>
    <property type="project" value="UniProtKB-KW"/>
</dbReference>
<dbReference type="GO" id="GO:0016042">
    <property type="term" value="P:lipid catabolic process"/>
    <property type="evidence" value="ECO:0007669"/>
    <property type="project" value="UniProtKB-KW"/>
</dbReference>